<gene>
    <name type="primary">hemC</name>
    <name type="ordered locus">SAOUHSC_01774</name>
</gene>
<evidence type="ECO:0000250" key="1"/>
<evidence type="ECO:0000305" key="2"/>
<name>HEM3_STAA8</name>
<reference key="1">
    <citation type="journal article" date="1997" name="Gene">
        <title>Isolation of the Staphylococcus aureus hemCDBL gene cluster coding for early steps in heme biosynthesis.</title>
        <authorList>
            <person name="Kafala B."/>
            <person name="Sasarman A."/>
        </authorList>
    </citation>
    <scope>NUCLEOTIDE SEQUENCE [GENOMIC DNA]</scope>
</reference>
<reference key="2">
    <citation type="book" date="2006" name="Gram positive pathogens, 2nd edition">
        <title>The Staphylococcus aureus NCTC 8325 genome.</title>
        <editorList>
            <person name="Fischetti V."/>
            <person name="Novick R."/>
            <person name="Ferretti J."/>
            <person name="Portnoy D."/>
            <person name="Rood J."/>
        </editorList>
        <authorList>
            <person name="Gillaspy A.F."/>
            <person name="Worrell V."/>
            <person name="Orvis J."/>
            <person name="Roe B.A."/>
            <person name="Dyer D.W."/>
            <person name="Iandolo J.J."/>
        </authorList>
    </citation>
    <scope>NUCLEOTIDE SEQUENCE [LARGE SCALE GENOMIC DNA]</scope>
    <source>
        <strain>NCTC 8325 / PS 47</strain>
    </source>
</reference>
<protein>
    <recommendedName>
        <fullName>Porphobilinogen deaminase</fullName>
        <shortName>PBG</shortName>
        <ecNumber>2.5.1.61</ecNumber>
    </recommendedName>
    <alternativeName>
        <fullName>Hydroxymethylbilane synthase</fullName>
        <shortName>HMBS</shortName>
    </alternativeName>
    <alternativeName>
        <fullName>Pre-uroporphyrinogen synthase</fullName>
    </alternativeName>
</protein>
<accession>O34090</accession>
<accession>Q2FXR1</accession>
<sequence length="308" mass="34354">MRKLVVGSRRSKLALTQSQQFIDKLKAVEPNLEIEIKEIVTKGDRIVDKQLSKVGGKGLFVKEIQHELFEKNIDMAIHSLKDVPSVIPEGLTLGCIPDRELPFDAYISKTHTPLSQLPEGSIIGTSSLRRGAQILSKYPNLEIKWIRGNIDTRLEKLQTEDYDAIILAAAGLRRMGWSDDIVTSYLDRDTLLPAIGQGALGIECRSDDEELLTLLSKVHNDEVAKCVTAERTFLAEMDGSCQVPIAGYATISDQNEIEFTGLIMTPDGKERFEYTMNGTDPVELGKTVSNKLKEQGAYEIIKRLNEQH</sequence>
<feature type="chain" id="PRO_0000142993" description="Porphobilinogen deaminase">
    <location>
        <begin position="1"/>
        <end position="308"/>
    </location>
</feature>
<feature type="modified residue" description="S-(dipyrrolylmethanemethyl)cysteine" evidence="1">
    <location>
        <position position="241"/>
    </location>
</feature>
<proteinExistence type="inferred from homology"/>
<comment type="function">
    <text evidence="1">Tetrapolymerization of the monopyrrole PBG into the hydroxymethylbilane pre-uroporphyrinogen in several discrete steps.</text>
</comment>
<comment type="catalytic activity">
    <reaction>
        <text>4 porphobilinogen + H2O = hydroxymethylbilane + 4 NH4(+)</text>
        <dbReference type="Rhea" id="RHEA:13185"/>
        <dbReference type="ChEBI" id="CHEBI:15377"/>
        <dbReference type="ChEBI" id="CHEBI:28938"/>
        <dbReference type="ChEBI" id="CHEBI:57845"/>
        <dbReference type="ChEBI" id="CHEBI:58126"/>
        <dbReference type="EC" id="2.5.1.61"/>
    </reaction>
</comment>
<comment type="cofactor">
    <cofactor evidence="1">
        <name>dipyrromethane</name>
        <dbReference type="ChEBI" id="CHEBI:60342"/>
    </cofactor>
    <text evidence="1">Binds 1 dipyrromethane group covalently.</text>
</comment>
<comment type="pathway">
    <text>Porphyrin-containing compound metabolism; protoporphyrin-IX biosynthesis; coproporphyrinogen-III from 5-aminolevulinate: step 2/4.</text>
</comment>
<comment type="subunit">
    <text evidence="1">Monomer.</text>
</comment>
<comment type="miscellaneous">
    <text evidence="1">The porphobilinogen subunits are added to the dipyrromethane group.</text>
</comment>
<comment type="similarity">
    <text evidence="2">Belongs to the HMBS family.</text>
</comment>
<dbReference type="EC" id="2.5.1.61"/>
<dbReference type="EMBL" id="U89396">
    <property type="protein sequence ID" value="AAC45833.1"/>
    <property type="molecule type" value="Genomic_DNA"/>
</dbReference>
<dbReference type="EMBL" id="CP000253">
    <property type="protein sequence ID" value="ABD30843.1"/>
    <property type="molecule type" value="Genomic_DNA"/>
</dbReference>
<dbReference type="RefSeq" id="WP_001230228.1">
    <property type="nucleotide sequence ID" value="NZ_LS483365.1"/>
</dbReference>
<dbReference type="RefSeq" id="YP_500279.1">
    <property type="nucleotide sequence ID" value="NC_007795.1"/>
</dbReference>
<dbReference type="SMR" id="O34090"/>
<dbReference type="STRING" id="93061.SAOUHSC_01774"/>
<dbReference type="PaxDb" id="1280-SAXN108_1697"/>
<dbReference type="GeneID" id="3919692"/>
<dbReference type="KEGG" id="sao:SAOUHSC_01774"/>
<dbReference type="PATRIC" id="fig|93061.5.peg.1618"/>
<dbReference type="eggNOG" id="COG0181">
    <property type="taxonomic scope" value="Bacteria"/>
</dbReference>
<dbReference type="HOGENOM" id="CLU_019704_0_2_9"/>
<dbReference type="OrthoDB" id="9810298at2"/>
<dbReference type="UniPathway" id="UPA00251">
    <property type="reaction ID" value="UER00319"/>
</dbReference>
<dbReference type="PRO" id="PR:O34090"/>
<dbReference type="Proteomes" id="UP000008816">
    <property type="component" value="Chromosome"/>
</dbReference>
<dbReference type="GO" id="GO:0005737">
    <property type="term" value="C:cytoplasm"/>
    <property type="evidence" value="ECO:0000318"/>
    <property type="project" value="GO_Central"/>
</dbReference>
<dbReference type="GO" id="GO:0004418">
    <property type="term" value="F:hydroxymethylbilane synthase activity"/>
    <property type="evidence" value="ECO:0000318"/>
    <property type="project" value="GO_Central"/>
</dbReference>
<dbReference type="GO" id="GO:0006783">
    <property type="term" value="P:heme biosynthetic process"/>
    <property type="evidence" value="ECO:0000318"/>
    <property type="project" value="GO_Central"/>
</dbReference>
<dbReference type="GO" id="GO:0006782">
    <property type="term" value="P:protoporphyrinogen IX biosynthetic process"/>
    <property type="evidence" value="ECO:0007669"/>
    <property type="project" value="UniProtKB-UniRule"/>
</dbReference>
<dbReference type="CDD" id="cd13646">
    <property type="entry name" value="PBP2_EcHMBS_like"/>
    <property type="match status" value="1"/>
</dbReference>
<dbReference type="FunFam" id="3.30.160.40:FF:000001">
    <property type="entry name" value="Porphobilinogen deaminase"/>
    <property type="match status" value="1"/>
</dbReference>
<dbReference type="FunFam" id="3.40.190.10:FF:000004">
    <property type="entry name" value="Porphobilinogen deaminase"/>
    <property type="match status" value="1"/>
</dbReference>
<dbReference type="FunFam" id="3.40.190.10:FF:000005">
    <property type="entry name" value="Porphobilinogen deaminase"/>
    <property type="match status" value="1"/>
</dbReference>
<dbReference type="Gene3D" id="3.40.190.10">
    <property type="entry name" value="Periplasmic binding protein-like II"/>
    <property type="match status" value="2"/>
</dbReference>
<dbReference type="Gene3D" id="3.30.160.40">
    <property type="entry name" value="Porphobilinogen deaminase, C-terminal domain"/>
    <property type="match status" value="1"/>
</dbReference>
<dbReference type="HAMAP" id="MF_00260">
    <property type="entry name" value="Porphobil_deam"/>
    <property type="match status" value="1"/>
</dbReference>
<dbReference type="InterPro" id="IPR000860">
    <property type="entry name" value="HemC"/>
</dbReference>
<dbReference type="InterPro" id="IPR022419">
    <property type="entry name" value="Porphobilin_deaminase_cofac_BS"/>
</dbReference>
<dbReference type="InterPro" id="IPR022417">
    <property type="entry name" value="Porphobilin_deaminase_N"/>
</dbReference>
<dbReference type="InterPro" id="IPR022418">
    <property type="entry name" value="Porphobilinogen_deaminase_C"/>
</dbReference>
<dbReference type="InterPro" id="IPR036803">
    <property type="entry name" value="Porphobilinogen_deaminase_C_sf"/>
</dbReference>
<dbReference type="NCBIfam" id="TIGR00212">
    <property type="entry name" value="hemC"/>
    <property type="match status" value="1"/>
</dbReference>
<dbReference type="PANTHER" id="PTHR11557">
    <property type="entry name" value="PORPHOBILINOGEN DEAMINASE"/>
    <property type="match status" value="1"/>
</dbReference>
<dbReference type="PANTHER" id="PTHR11557:SF0">
    <property type="entry name" value="PORPHOBILINOGEN DEAMINASE"/>
    <property type="match status" value="1"/>
</dbReference>
<dbReference type="Pfam" id="PF01379">
    <property type="entry name" value="Porphobil_deam"/>
    <property type="match status" value="1"/>
</dbReference>
<dbReference type="Pfam" id="PF03900">
    <property type="entry name" value="Porphobil_deamC"/>
    <property type="match status" value="1"/>
</dbReference>
<dbReference type="PIRSF" id="PIRSF001438">
    <property type="entry name" value="4pyrrol_synth_OHMeBilane_synth"/>
    <property type="match status" value="1"/>
</dbReference>
<dbReference type="PRINTS" id="PR00151">
    <property type="entry name" value="PORPHBDMNASE"/>
</dbReference>
<dbReference type="SUPFAM" id="SSF53850">
    <property type="entry name" value="Periplasmic binding protein-like II"/>
    <property type="match status" value="1"/>
</dbReference>
<dbReference type="SUPFAM" id="SSF54782">
    <property type="entry name" value="Porphobilinogen deaminase (hydroxymethylbilane synthase), C-terminal domain"/>
    <property type="match status" value="1"/>
</dbReference>
<dbReference type="PROSITE" id="PS00533">
    <property type="entry name" value="PORPHOBILINOGEN_DEAM"/>
    <property type="match status" value="1"/>
</dbReference>
<organism>
    <name type="scientific">Staphylococcus aureus (strain NCTC 8325 / PS 47)</name>
    <dbReference type="NCBI Taxonomy" id="93061"/>
    <lineage>
        <taxon>Bacteria</taxon>
        <taxon>Bacillati</taxon>
        <taxon>Bacillota</taxon>
        <taxon>Bacilli</taxon>
        <taxon>Bacillales</taxon>
        <taxon>Staphylococcaceae</taxon>
        <taxon>Staphylococcus</taxon>
    </lineage>
</organism>
<keyword id="KW-0627">Porphyrin biosynthesis</keyword>
<keyword id="KW-1185">Reference proteome</keyword>
<keyword id="KW-0808">Transferase</keyword>